<gene>
    <name evidence="1" type="primary">aspS</name>
    <name type="ordered locus">VV2288</name>
</gene>
<comment type="function">
    <text evidence="1">Catalyzes the attachment of L-aspartate to tRNA(Asp) in a two-step reaction: L-aspartate is first activated by ATP to form Asp-AMP and then transferred to the acceptor end of tRNA(Asp).</text>
</comment>
<comment type="catalytic activity">
    <reaction evidence="1">
        <text>tRNA(Asp) + L-aspartate + ATP = L-aspartyl-tRNA(Asp) + AMP + diphosphate</text>
        <dbReference type="Rhea" id="RHEA:19649"/>
        <dbReference type="Rhea" id="RHEA-COMP:9660"/>
        <dbReference type="Rhea" id="RHEA-COMP:9678"/>
        <dbReference type="ChEBI" id="CHEBI:29991"/>
        <dbReference type="ChEBI" id="CHEBI:30616"/>
        <dbReference type="ChEBI" id="CHEBI:33019"/>
        <dbReference type="ChEBI" id="CHEBI:78442"/>
        <dbReference type="ChEBI" id="CHEBI:78516"/>
        <dbReference type="ChEBI" id="CHEBI:456215"/>
        <dbReference type="EC" id="6.1.1.12"/>
    </reaction>
</comment>
<comment type="subunit">
    <text evidence="1">Homodimer.</text>
</comment>
<comment type="subcellular location">
    <subcellularLocation>
        <location evidence="1">Cytoplasm</location>
    </subcellularLocation>
</comment>
<comment type="similarity">
    <text evidence="1">Belongs to the class-II aminoacyl-tRNA synthetase family. Type 1 subfamily.</text>
</comment>
<sequence>MRTHYCGHLNKSLAGQTVELCGWVNRRRDLGGLIFIDMRDREGIVQVVVDPDMADAYAVASQLRNEFCIKLTGEVRTRPESQVNKEMATGEVEILAKGLEIINRSDVLPLDFNQKNSEEQRLKYRYLDLRRPEMSDRIKLRAKASSFVRRFLDDNGFLDIETPVLTKATPEGARDYLVPSRVHKGSFYALPQSPQLFKQLLMMSGFDRYYQIVKCFRDEDLRADRQPEFTQIDIETSFMTSDQVRAVTEKMVREMWLELLNVDLGEFPVMPFSEAIRRFGSDKPDLRNPLELVDVADLVKDVDFKVFSGPANDEKGRVAVIRVPGGAELTRKQIDEYTGFVNIYGAKGLAWMKVNDRAAGMEGIQSPVAKFLSEDVINGILERTQAESGDIILFGADKANIVAEALGALRLKLGKDLGLTKEGTWAPLWVVDFPMFEEDDEGNLHAMHHPFTSPLGLTAEELKANPAPAVSNAYDMVLNGYEVGGGSVRIHNAEMQAAVFDILGIDADEQKLKFGFLLDALKFGTPPHAGLAFGLDRLVMLLCGTENIRDVIAFPKTTAAACLMTDAPSVANPAALEELAIAVTVAKEKSAE</sequence>
<proteinExistence type="inferred from homology"/>
<reference key="1">
    <citation type="journal article" date="2003" name="Genome Res.">
        <title>Comparative genome analysis of Vibrio vulnificus, a marine pathogen.</title>
        <authorList>
            <person name="Chen C.-Y."/>
            <person name="Wu K.-M."/>
            <person name="Chang Y.-C."/>
            <person name="Chang C.-H."/>
            <person name="Tsai H.-C."/>
            <person name="Liao T.-L."/>
            <person name="Liu Y.-M."/>
            <person name="Chen H.-J."/>
            <person name="Shen A.B.-T."/>
            <person name="Li J.-C."/>
            <person name="Su T.-L."/>
            <person name="Shao C.-P."/>
            <person name="Lee C.-T."/>
            <person name="Hor L.-I."/>
            <person name="Tsai S.-F."/>
        </authorList>
    </citation>
    <scope>NUCLEOTIDE SEQUENCE [LARGE SCALE GENOMIC DNA]</scope>
    <source>
        <strain>YJ016</strain>
    </source>
</reference>
<dbReference type="EC" id="6.1.1.12" evidence="1"/>
<dbReference type="EMBL" id="BA000037">
    <property type="protein sequence ID" value="BAC95052.1"/>
    <property type="molecule type" value="Genomic_DNA"/>
</dbReference>
<dbReference type="RefSeq" id="WP_011150790.1">
    <property type="nucleotide sequence ID" value="NC_005139.1"/>
</dbReference>
<dbReference type="SMR" id="Q7MJ74"/>
<dbReference type="STRING" id="672.VV93_v1c19980"/>
<dbReference type="KEGG" id="vvy:VV2288"/>
<dbReference type="eggNOG" id="COG0173">
    <property type="taxonomic scope" value="Bacteria"/>
</dbReference>
<dbReference type="HOGENOM" id="CLU_014330_3_2_6"/>
<dbReference type="Proteomes" id="UP000002675">
    <property type="component" value="Chromosome I"/>
</dbReference>
<dbReference type="GO" id="GO:0005737">
    <property type="term" value="C:cytoplasm"/>
    <property type="evidence" value="ECO:0007669"/>
    <property type="project" value="UniProtKB-SubCell"/>
</dbReference>
<dbReference type="GO" id="GO:0004815">
    <property type="term" value="F:aspartate-tRNA ligase activity"/>
    <property type="evidence" value="ECO:0007669"/>
    <property type="project" value="UniProtKB-UniRule"/>
</dbReference>
<dbReference type="GO" id="GO:0005524">
    <property type="term" value="F:ATP binding"/>
    <property type="evidence" value="ECO:0007669"/>
    <property type="project" value="UniProtKB-UniRule"/>
</dbReference>
<dbReference type="GO" id="GO:0003676">
    <property type="term" value="F:nucleic acid binding"/>
    <property type="evidence" value="ECO:0007669"/>
    <property type="project" value="InterPro"/>
</dbReference>
<dbReference type="GO" id="GO:0006422">
    <property type="term" value="P:aspartyl-tRNA aminoacylation"/>
    <property type="evidence" value="ECO:0007669"/>
    <property type="project" value="UniProtKB-UniRule"/>
</dbReference>
<dbReference type="CDD" id="cd00777">
    <property type="entry name" value="AspRS_core"/>
    <property type="match status" value="1"/>
</dbReference>
<dbReference type="CDD" id="cd04317">
    <property type="entry name" value="EcAspRS_like_N"/>
    <property type="match status" value="1"/>
</dbReference>
<dbReference type="FunFam" id="2.40.50.140:FF:000080">
    <property type="entry name" value="Aspartate--tRNA ligase"/>
    <property type="match status" value="1"/>
</dbReference>
<dbReference type="Gene3D" id="3.30.930.10">
    <property type="entry name" value="Bira Bifunctional Protein, Domain 2"/>
    <property type="match status" value="1"/>
</dbReference>
<dbReference type="Gene3D" id="3.30.1360.30">
    <property type="entry name" value="GAD-like domain"/>
    <property type="match status" value="1"/>
</dbReference>
<dbReference type="Gene3D" id="2.40.50.140">
    <property type="entry name" value="Nucleic acid-binding proteins"/>
    <property type="match status" value="1"/>
</dbReference>
<dbReference type="HAMAP" id="MF_00044">
    <property type="entry name" value="Asp_tRNA_synth_type1"/>
    <property type="match status" value="1"/>
</dbReference>
<dbReference type="InterPro" id="IPR004364">
    <property type="entry name" value="Aa-tRNA-synt_II"/>
</dbReference>
<dbReference type="InterPro" id="IPR006195">
    <property type="entry name" value="aa-tRNA-synth_II"/>
</dbReference>
<dbReference type="InterPro" id="IPR045864">
    <property type="entry name" value="aa-tRNA-synth_II/BPL/LPL"/>
</dbReference>
<dbReference type="InterPro" id="IPR004524">
    <property type="entry name" value="Asp-tRNA-ligase_1"/>
</dbReference>
<dbReference type="InterPro" id="IPR047089">
    <property type="entry name" value="Asp-tRNA-ligase_1_N"/>
</dbReference>
<dbReference type="InterPro" id="IPR002312">
    <property type="entry name" value="Asp/Asn-tRNA-synth_IIb"/>
</dbReference>
<dbReference type="InterPro" id="IPR047090">
    <property type="entry name" value="AspRS_core"/>
</dbReference>
<dbReference type="InterPro" id="IPR004115">
    <property type="entry name" value="GAD-like_sf"/>
</dbReference>
<dbReference type="InterPro" id="IPR029351">
    <property type="entry name" value="GAD_dom"/>
</dbReference>
<dbReference type="InterPro" id="IPR012340">
    <property type="entry name" value="NA-bd_OB-fold"/>
</dbReference>
<dbReference type="InterPro" id="IPR004365">
    <property type="entry name" value="NA-bd_OB_tRNA"/>
</dbReference>
<dbReference type="NCBIfam" id="TIGR00459">
    <property type="entry name" value="aspS_bact"/>
    <property type="match status" value="1"/>
</dbReference>
<dbReference type="NCBIfam" id="NF001750">
    <property type="entry name" value="PRK00476.1"/>
    <property type="match status" value="1"/>
</dbReference>
<dbReference type="PANTHER" id="PTHR22594:SF5">
    <property type="entry name" value="ASPARTATE--TRNA LIGASE, MITOCHONDRIAL"/>
    <property type="match status" value="1"/>
</dbReference>
<dbReference type="PANTHER" id="PTHR22594">
    <property type="entry name" value="ASPARTYL/LYSYL-TRNA SYNTHETASE"/>
    <property type="match status" value="1"/>
</dbReference>
<dbReference type="Pfam" id="PF02938">
    <property type="entry name" value="GAD"/>
    <property type="match status" value="1"/>
</dbReference>
<dbReference type="Pfam" id="PF00152">
    <property type="entry name" value="tRNA-synt_2"/>
    <property type="match status" value="1"/>
</dbReference>
<dbReference type="Pfam" id="PF01336">
    <property type="entry name" value="tRNA_anti-codon"/>
    <property type="match status" value="1"/>
</dbReference>
<dbReference type="PRINTS" id="PR01042">
    <property type="entry name" value="TRNASYNTHASP"/>
</dbReference>
<dbReference type="SUPFAM" id="SSF55681">
    <property type="entry name" value="Class II aaRS and biotin synthetases"/>
    <property type="match status" value="1"/>
</dbReference>
<dbReference type="SUPFAM" id="SSF55261">
    <property type="entry name" value="GAD domain-like"/>
    <property type="match status" value="1"/>
</dbReference>
<dbReference type="SUPFAM" id="SSF50249">
    <property type="entry name" value="Nucleic acid-binding proteins"/>
    <property type="match status" value="1"/>
</dbReference>
<dbReference type="PROSITE" id="PS50862">
    <property type="entry name" value="AA_TRNA_LIGASE_II"/>
    <property type="match status" value="1"/>
</dbReference>
<keyword id="KW-0030">Aminoacyl-tRNA synthetase</keyword>
<keyword id="KW-0067">ATP-binding</keyword>
<keyword id="KW-0963">Cytoplasm</keyword>
<keyword id="KW-0436">Ligase</keyword>
<keyword id="KW-0547">Nucleotide-binding</keyword>
<keyword id="KW-0648">Protein biosynthesis</keyword>
<protein>
    <recommendedName>
        <fullName evidence="1">Aspartate--tRNA ligase</fullName>
        <ecNumber evidence="1">6.1.1.12</ecNumber>
    </recommendedName>
    <alternativeName>
        <fullName evidence="1">Aspartyl-tRNA synthetase</fullName>
        <shortName evidence="1">AspRS</shortName>
    </alternativeName>
</protein>
<accession>Q7MJ74</accession>
<evidence type="ECO:0000255" key="1">
    <source>
        <dbReference type="HAMAP-Rule" id="MF_00044"/>
    </source>
</evidence>
<name>SYD_VIBVY</name>
<feature type="chain" id="PRO_0000110979" description="Aspartate--tRNA ligase">
    <location>
        <begin position="1"/>
        <end position="592"/>
    </location>
</feature>
<feature type="region of interest" description="Aspartate" evidence="1">
    <location>
        <begin position="195"/>
        <end position="198"/>
    </location>
</feature>
<feature type="binding site" evidence="1">
    <location>
        <position position="171"/>
    </location>
    <ligand>
        <name>L-aspartate</name>
        <dbReference type="ChEBI" id="CHEBI:29991"/>
    </ligand>
</feature>
<feature type="binding site" evidence="1">
    <location>
        <begin position="217"/>
        <end position="219"/>
    </location>
    <ligand>
        <name>ATP</name>
        <dbReference type="ChEBI" id="CHEBI:30616"/>
    </ligand>
</feature>
<feature type="binding site" evidence="1">
    <location>
        <position position="217"/>
    </location>
    <ligand>
        <name>L-aspartate</name>
        <dbReference type="ChEBI" id="CHEBI:29991"/>
    </ligand>
</feature>
<feature type="binding site" evidence="1">
    <location>
        <position position="226"/>
    </location>
    <ligand>
        <name>ATP</name>
        <dbReference type="ChEBI" id="CHEBI:30616"/>
    </ligand>
</feature>
<feature type="binding site" evidence="1">
    <location>
        <position position="448"/>
    </location>
    <ligand>
        <name>L-aspartate</name>
        <dbReference type="ChEBI" id="CHEBI:29991"/>
    </ligand>
</feature>
<feature type="binding site" evidence="1">
    <location>
        <position position="482"/>
    </location>
    <ligand>
        <name>ATP</name>
        <dbReference type="ChEBI" id="CHEBI:30616"/>
    </ligand>
</feature>
<feature type="binding site" evidence="1">
    <location>
        <position position="489"/>
    </location>
    <ligand>
        <name>L-aspartate</name>
        <dbReference type="ChEBI" id="CHEBI:29991"/>
    </ligand>
</feature>
<feature type="binding site" evidence="1">
    <location>
        <begin position="534"/>
        <end position="537"/>
    </location>
    <ligand>
        <name>ATP</name>
        <dbReference type="ChEBI" id="CHEBI:30616"/>
    </ligand>
</feature>
<organism>
    <name type="scientific">Vibrio vulnificus (strain YJ016)</name>
    <dbReference type="NCBI Taxonomy" id="196600"/>
    <lineage>
        <taxon>Bacteria</taxon>
        <taxon>Pseudomonadati</taxon>
        <taxon>Pseudomonadota</taxon>
        <taxon>Gammaproteobacteria</taxon>
        <taxon>Vibrionales</taxon>
        <taxon>Vibrionaceae</taxon>
        <taxon>Vibrio</taxon>
    </lineage>
</organism>